<dbReference type="EC" id="3.1.1.1" evidence="2"/>
<dbReference type="EMBL" id="AY078171">
    <property type="protein sequence ID" value="AAM14630.1"/>
    <property type="molecule type" value="mRNA"/>
</dbReference>
<dbReference type="EMBL" id="AK009308">
    <property type="protein sequence ID" value="BAB26208.1"/>
    <property type="molecule type" value="mRNA"/>
</dbReference>
<dbReference type="EMBL" id="AK030338">
    <property type="protein sequence ID" value="BAC26910.1"/>
    <property type="molecule type" value="mRNA"/>
</dbReference>
<dbReference type="EMBL" id="AK033511">
    <property type="protein sequence ID" value="BAC28331.1"/>
    <property type="molecule type" value="mRNA"/>
</dbReference>
<dbReference type="EMBL" id="AL603905">
    <property type="status" value="NOT_ANNOTATED_CDS"/>
    <property type="molecule type" value="Genomic_DNA"/>
</dbReference>
<dbReference type="CCDS" id="CCDS25041.1"/>
<dbReference type="RefSeq" id="NP_081412.1">
    <property type="nucleotide sequence ID" value="NM_027136.3"/>
</dbReference>
<dbReference type="SMR" id="Q9D7E3"/>
<dbReference type="FunCoup" id="Q9D7E3">
    <property type="interactions" value="2280"/>
</dbReference>
<dbReference type="STRING" id="10090.ENSMUSP00000071493"/>
<dbReference type="ESTHER" id="mouse-OVCA2">
    <property type="family name" value="FSH1"/>
</dbReference>
<dbReference type="PhosphoSitePlus" id="Q9D7E3"/>
<dbReference type="PaxDb" id="10090-ENSMUSP00000071493"/>
<dbReference type="PeptideAtlas" id="Q9D7E3"/>
<dbReference type="ProteomicsDB" id="294408"/>
<dbReference type="Pumba" id="Q9D7E3"/>
<dbReference type="Antibodypedia" id="69773">
    <property type="antibodies" value="59 antibodies from 15 providers"/>
</dbReference>
<dbReference type="DNASU" id="246257"/>
<dbReference type="Ensembl" id="ENSMUST00000071562.3">
    <property type="protein sequence ID" value="ENSMUSP00000071493.3"/>
    <property type="gene ID" value="ENSMUSG00000038268.5"/>
</dbReference>
<dbReference type="GeneID" id="246257"/>
<dbReference type="KEGG" id="mmu:246257"/>
<dbReference type="UCSC" id="uc007kdf.1">
    <property type="organism name" value="mouse"/>
</dbReference>
<dbReference type="AGR" id="MGI:2179725"/>
<dbReference type="CTD" id="124641"/>
<dbReference type="MGI" id="MGI:2179725">
    <property type="gene designation" value="Ovca2"/>
</dbReference>
<dbReference type="VEuPathDB" id="HostDB:ENSMUSG00000038268"/>
<dbReference type="eggNOG" id="KOG2551">
    <property type="taxonomic scope" value="Eukaryota"/>
</dbReference>
<dbReference type="GeneTree" id="ENSGT00390000003541"/>
<dbReference type="HOGENOM" id="CLU_051938_2_3_1"/>
<dbReference type="InParanoid" id="Q9D7E3"/>
<dbReference type="OMA" id="EEPRGWW"/>
<dbReference type="OrthoDB" id="414698at2759"/>
<dbReference type="PhylomeDB" id="Q9D7E3"/>
<dbReference type="TreeFam" id="TF313006"/>
<dbReference type="BioGRID-ORCS" id="246257">
    <property type="hits" value="2 hits in 78 CRISPR screens"/>
</dbReference>
<dbReference type="ChiTaRS" id="Ovca2">
    <property type="organism name" value="mouse"/>
</dbReference>
<dbReference type="PRO" id="PR:Q9D7E3"/>
<dbReference type="Proteomes" id="UP000000589">
    <property type="component" value="Chromosome 11"/>
</dbReference>
<dbReference type="RNAct" id="Q9D7E3">
    <property type="molecule type" value="protein"/>
</dbReference>
<dbReference type="Bgee" id="ENSMUSG00000038268">
    <property type="expression patterns" value="Expressed in epiblast (generic) and 64 other cell types or tissues"/>
</dbReference>
<dbReference type="GO" id="GO:0005737">
    <property type="term" value="C:cytoplasm"/>
    <property type="evidence" value="ECO:0000314"/>
    <property type="project" value="MGI"/>
</dbReference>
<dbReference type="GO" id="GO:0005634">
    <property type="term" value="C:nucleus"/>
    <property type="evidence" value="ECO:0000314"/>
    <property type="project" value="MGI"/>
</dbReference>
<dbReference type="GO" id="GO:0016787">
    <property type="term" value="F:hydrolase activity"/>
    <property type="evidence" value="ECO:0007669"/>
    <property type="project" value="UniProtKB-KW"/>
</dbReference>
<dbReference type="GO" id="GO:0032526">
    <property type="term" value="P:response to retinoic acid"/>
    <property type="evidence" value="ECO:0007669"/>
    <property type="project" value="Ensembl"/>
</dbReference>
<dbReference type="FunFam" id="3.40.50.1820:FF:000073">
    <property type="entry name" value="esterase OVCA2 isoform X6"/>
    <property type="match status" value="1"/>
</dbReference>
<dbReference type="Gene3D" id="3.40.50.1820">
    <property type="entry name" value="alpha/beta hydrolase"/>
    <property type="match status" value="1"/>
</dbReference>
<dbReference type="InterPro" id="IPR029058">
    <property type="entry name" value="AB_hydrolase_fold"/>
</dbReference>
<dbReference type="InterPro" id="IPR005645">
    <property type="entry name" value="FSH-like_dom"/>
</dbReference>
<dbReference type="InterPro" id="IPR050593">
    <property type="entry name" value="LovG"/>
</dbReference>
<dbReference type="PANTHER" id="PTHR48070">
    <property type="entry name" value="ESTERASE OVCA2"/>
    <property type="match status" value="1"/>
</dbReference>
<dbReference type="PANTHER" id="PTHR48070:SF6">
    <property type="entry name" value="ESTERASE OVCA2"/>
    <property type="match status" value="1"/>
</dbReference>
<dbReference type="Pfam" id="PF03959">
    <property type="entry name" value="FSH1"/>
    <property type="match status" value="1"/>
</dbReference>
<dbReference type="SUPFAM" id="SSF53474">
    <property type="entry name" value="alpha/beta-Hydrolases"/>
    <property type="match status" value="1"/>
</dbReference>
<accession>Q9D7E3</accession>
<gene>
    <name type="primary">Ovca2</name>
</gene>
<sequence length="225" mass="24246">MAARQTLRVLCLAGFRQSERGFREKTGALRKTLRGRAELVCLSGPHPVPEAAAPEGSCPDSGPCSPEEQPRGWWFSEEEADVFSALEESTVCRGLQEALETVARALDTLGPFDGLLGFSQGAALAAYVCALGQAGDPRFPLPRFIILVSGFCPRGLKEPILQSPMSLPSLHVFGDTDRVIPSQESMQLASRFLGAVTLTHSGGHFIPAAASQRQAYLKFLDQFAE</sequence>
<organism>
    <name type="scientific">Mus musculus</name>
    <name type="common">Mouse</name>
    <dbReference type="NCBI Taxonomy" id="10090"/>
    <lineage>
        <taxon>Eukaryota</taxon>
        <taxon>Metazoa</taxon>
        <taxon>Chordata</taxon>
        <taxon>Craniata</taxon>
        <taxon>Vertebrata</taxon>
        <taxon>Euteleostomi</taxon>
        <taxon>Mammalia</taxon>
        <taxon>Eutheria</taxon>
        <taxon>Euarchontoglires</taxon>
        <taxon>Glires</taxon>
        <taxon>Rodentia</taxon>
        <taxon>Myomorpha</taxon>
        <taxon>Muroidea</taxon>
        <taxon>Muridae</taxon>
        <taxon>Murinae</taxon>
        <taxon>Mus</taxon>
        <taxon>Mus</taxon>
    </lineage>
</organism>
<evidence type="ECO:0000250" key="1">
    <source>
        <dbReference type="UniProtKB" id="P38777"/>
    </source>
</evidence>
<evidence type="ECO:0000250" key="2">
    <source>
        <dbReference type="UniProtKB" id="Q8WZ82"/>
    </source>
</evidence>
<evidence type="ECO:0000269" key="3">
    <source>
    </source>
</evidence>
<evidence type="ECO:0000305" key="4"/>
<feature type="chain" id="PRO_0000300877" description="Esterase OVCA2">
    <location>
        <begin position="1"/>
        <end position="225"/>
    </location>
</feature>
<feature type="active site" description="Charge relay system" evidence="1">
    <location>
        <position position="119"/>
    </location>
</feature>
<feature type="active site" description="Charge relay system" evidence="1">
    <location>
        <position position="177"/>
    </location>
</feature>
<feature type="active site" description="Charge relay system" evidence="1">
    <location>
        <position position="204"/>
    </location>
</feature>
<comment type="function">
    <text evidence="2">Exhibits ester hydrolase activity with a strong preference for long-chain alkyl ester substrates and high selectivity against a variety of short, branched, and substituted esters. Is able to hydrolyze ester bonds within a wide range of p-nitrophenyl derivatives (C2-C14) in vitro, with a strong preference toward substrates of &gt;8 carbons.</text>
</comment>
<comment type="catalytic activity">
    <reaction evidence="2">
        <text>a carboxylic ester + H2O = an alcohol + a carboxylate + H(+)</text>
        <dbReference type="Rhea" id="RHEA:21164"/>
        <dbReference type="ChEBI" id="CHEBI:15377"/>
        <dbReference type="ChEBI" id="CHEBI:15378"/>
        <dbReference type="ChEBI" id="CHEBI:29067"/>
        <dbReference type="ChEBI" id="CHEBI:30879"/>
        <dbReference type="ChEBI" id="CHEBI:33308"/>
        <dbReference type="EC" id="3.1.1.1"/>
    </reaction>
</comment>
<comment type="tissue specificity">
    <text evidence="3">Strongly expressed in kidney and liver. Moderately expressed in brain, skin and testis. Weakly expressed in heart, lung, small intestine, spleen, stomach and thymus.</text>
</comment>
<comment type="developmental stage">
    <text evidence="3">Expressed in embryonic stem (ES) cells.</text>
</comment>
<comment type="similarity">
    <text evidence="4">Belongs to the LovG family.</text>
</comment>
<comment type="caution">
    <text evidence="4">Encoded in an intron of the gene DPH1/OVCA1 (same strand).</text>
</comment>
<reference key="1">
    <citation type="journal article" date="2001" name="Biochem. Biophys. Res. Commun.">
        <title>Cloning, structure, and expression of the mouse Ovca1 gene.</title>
        <authorList>
            <person name="Chen C.-M."/>
            <person name="Behringer R.R."/>
        </authorList>
    </citation>
    <scope>NUCLEOTIDE SEQUENCE [MRNA]</scope>
    <scope>TISSUE SPECIFICITY</scope>
    <scope>DEVELOPMENTAL STAGE</scope>
    <source>
        <strain>129/SvEv</strain>
    </source>
</reference>
<reference key="2">
    <citation type="journal article" date="2005" name="Science">
        <title>The transcriptional landscape of the mammalian genome.</title>
        <authorList>
            <person name="Carninci P."/>
            <person name="Kasukawa T."/>
            <person name="Katayama S."/>
            <person name="Gough J."/>
            <person name="Frith M.C."/>
            <person name="Maeda N."/>
            <person name="Oyama R."/>
            <person name="Ravasi T."/>
            <person name="Lenhard B."/>
            <person name="Wells C."/>
            <person name="Kodzius R."/>
            <person name="Shimokawa K."/>
            <person name="Bajic V.B."/>
            <person name="Brenner S.E."/>
            <person name="Batalov S."/>
            <person name="Forrest A.R."/>
            <person name="Zavolan M."/>
            <person name="Davis M.J."/>
            <person name="Wilming L.G."/>
            <person name="Aidinis V."/>
            <person name="Allen J.E."/>
            <person name="Ambesi-Impiombato A."/>
            <person name="Apweiler R."/>
            <person name="Aturaliya R.N."/>
            <person name="Bailey T.L."/>
            <person name="Bansal M."/>
            <person name="Baxter L."/>
            <person name="Beisel K.W."/>
            <person name="Bersano T."/>
            <person name="Bono H."/>
            <person name="Chalk A.M."/>
            <person name="Chiu K.P."/>
            <person name="Choudhary V."/>
            <person name="Christoffels A."/>
            <person name="Clutterbuck D.R."/>
            <person name="Crowe M.L."/>
            <person name="Dalla E."/>
            <person name="Dalrymple B.P."/>
            <person name="de Bono B."/>
            <person name="Della Gatta G."/>
            <person name="di Bernardo D."/>
            <person name="Down T."/>
            <person name="Engstrom P."/>
            <person name="Fagiolini M."/>
            <person name="Faulkner G."/>
            <person name="Fletcher C.F."/>
            <person name="Fukushima T."/>
            <person name="Furuno M."/>
            <person name="Futaki S."/>
            <person name="Gariboldi M."/>
            <person name="Georgii-Hemming P."/>
            <person name="Gingeras T.R."/>
            <person name="Gojobori T."/>
            <person name="Green R.E."/>
            <person name="Gustincich S."/>
            <person name="Harbers M."/>
            <person name="Hayashi Y."/>
            <person name="Hensch T.K."/>
            <person name="Hirokawa N."/>
            <person name="Hill D."/>
            <person name="Huminiecki L."/>
            <person name="Iacono M."/>
            <person name="Ikeo K."/>
            <person name="Iwama A."/>
            <person name="Ishikawa T."/>
            <person name="Jakt M."/>
            <person name="Kanapin A."/>
            <person name="Katoh M."/>
            <person name="Kawasawa Y."/>
            <person name="Kelso J."/>
            <person name="Kitamura H."/>
            <person name="Kitano H."/>
            <person name="Kollias G."/>
            <person name="Krishnan S.P."/>
            <person name="Kruger A."/>
            <person name="Kummerfeld S.K."/>
            <person name="Kurochkin I.V."/>
            <person name="Lareau L.F."/>
            <person name="Lazarevic D."/>
            <person name="Lipovich L."/>
            <person name="Liu J."/>
            <person name="Liuni S."/>
            <person name="McWilliam S."/>
            <person name="Madan Babu M."/>
            <person name="Madera M."/>
            <person name="Marchionni L."/>
            <person name="Matsuda H."/>
            <person name="Matsuzawa S."/>
            <person name="Miki H."/>
            <person name="Mignone F."/>
            <person name="Miyake S."/>
            <person name="Morris K."/>
            <person name="Mottagui-Tabar S."/>
            <person name="Mulder N."/>
            <person name="Nakano N."/>
            <person name="Nakauchi H."/>
            <person name="Ng P."/>
            <person name="Nilsson R."/>
            <person name="Nishiguchi S."/>
            <person name="Nishikawa S."/>
            <person name="Nori F."/>
            <person name="Ohara O."/>
            <person name="Okazaki Y."/>
            <person name="Orlando V."/>
            <person name="Pang K.C."/>
            <person name="Pavan W.J."/>
            <person name="Pavesi G."/>
            <person name="Pesole G."/>
            <person name="Petrovsky N."/>
            <person name="Piazza S."/>
            <person name="Reed J."/>
            <person name="Reid J.F."/>
            <person name="Ring B.Z."/>
            <person name="Ringwald M."/>
            <person name="Rost B."/>
            <person name="Ruan Y."/>
            <person name="Salzberg S.L."/>
            <person name="Sandelin A."/>
            <person name="Schneider C."/>
            <person name="Schoenbach C."/>
            <person name="Sekiguchi K."/>
            <person name="Semple C.A."/>
            <person name="Seno S."/>
            <person name="Sessa L."/>
            <person name="Sheng Y."/>
            <person name="Shibata Y."/>
            <person name="Shimada H."/>
            <person name="Shimada K."/>
            <person name="Silva D."/>
            <person name="Sinclair B."/>
            <person name="Sperling S."/>
            <person name="Stupka E."/>
            <person name="Sugiura K."/>
            <person name="Sultana R."/>
            <person name="Takenaka Y."/>
            <person name="Taki K."/>
            <person name="Tammoja K."/>
            <person name="Tan S.L."/>
            <person name="Tang S."/>
            <person name="Taylor M.S."/>
            <person name="Tegner J."/>
            <person name="Teichmann S.A."/>
            <person name="Ueda H.R."/>
            <person name="van Nimwegen E."/>
            <person name="Verardo R."/>
            <person name="Wei C.L."/>
            <person name="Yagi K."/>
            <person name="Yamanishi H."/>
            <person name="Zabarovsky E."/>
            <person name="Zhu S."/>
            <person name="Zimmer A."/>
            <person name="Hide W."/>
            <person name="Bult C."/>
            <person name="Grimmond S.M."/>
            <person name="Teasdale R.D."/>
            <person name="Liu E.T."/>
            <person name="Brusic V."/>
            <person name="Quackenbush J."/>
            <person name="Wahlestedt C."/>
            <person name="Mattick J.S."/>
            <person name="Hume D.A."/>
            <person name="Kai C."/>
            <person name="Sasaki D."/>
            <person name="Tomaru Y."/>
            <person name="Fukuda S."/>
            <person name="Kanamori-Katayama M."/>
            <person name="Suzuki M."/>
            <person name="Aoki J."/>
            <person name="Arakawa T."/>
            <person name="Iida J."/>
            <person name="Imamura K."/>
            <person name="Itoh M."/>
            <person name="Kato T."/>
            <person name="Kawaji H."/>
            <person name="Kawagashira N."/>
            <person name="Kawashima T."/>
            <person name="Kojima M."/>
            <person name="Kondo S."/>
            <person name="Konno H."/>
            <person name="Nakano K."/>
            <person name="Ninomiya N."/>
            <person name="Nishio T."/>
            <person name="Okada M."/>
            <person name="Plessy C."/>
            <person name="Shibata K."/>
            <person name="Shiraki T."/>
            <person name="Suzuki S."/>
            <person name="Tagami M."/>
            <person name="Waki K."/>
            <person name="Watahiki A."/>
            <person name="Okamura-Oho Y."/>
            <person name="Suzuki H."/>
            <person name="Kawai J."/>
            <person name="Hayashizaki Y."/>
        </authorList>
    </citation>
    <scope>NUCLEOTIDE SEQUENCE [LARGE SCALE MRNA]</scope>
    <source>
        <strain>C57BL/6J</strain>
        <tissue>Colon</tissue>
        <tissue>Intestine</tissue>
        <tissue>Tongue</tissue>
    </source>
</reference>
<reference key="3">
    <citation type="journal article" date="2009" name="PLoS Biol.">
        <title>Lineage-specific biology revealed by a finished genome assembly of the mouse.</title>
        <authorList>
            <person name="Church D.M."/>
            <person name="Goodstadt L."/>
            <person name="Hillier L.W."/>
            <person name="Zody M.C."/>
            <person name="Goldstein S."/>
            <person name="She X."/>
            <person name="Bult C.J."/>
            <person name="Agarwala R."/>
            <person name="Cherry J.L."/>
            <person name="DiCuccio M."/>
            <person name="Hlavina W."/>
            <person name="Kapustin Y."/>
            <person name="Meric P."/>
            <person name="Maglott D."/>
            <person name="Birtle Z."/>
            <person name="Marques A.C."/>
            <person name="Graves T."/>
            <person name="Zhou S."/>
            <person name="Teague B."/>
            <person name="Potamousis K."/>
            <person name="Churas C."/>
            <person name="Place M."/>
            <person name="Herschleb J."/>
            <person name="Runnheim R."/>
            <person name="Forrest D."/>
            <person name="Amos-Landgraf J."/>
            <person name="Schwartz D.C."/>
            <person name="Cheng Z."/>
            <person name="Lindblad-Toh K."/>
            <person name="Eichler E.E."/>
            <person name="Ponting C.P."/>
        </authorList>
    </citation>
    <scope>NUCLEOTIDE SEQUENCE [LARGE SCALE GENOMIC DNA]</scope>
    <source>
        <strain>C57BL/6J</strain>
    </source>
</reference>
<reference key="4">
    <citation type="journal article" date="2010" name="Cell">
        <title>A tissue-specific atlas of mouse protein phosphorylation and expression.</title>
        <authorList>
            <person name="Huttlin E.L."/>
            <person name="Jedrychowski M.P."/>
            <person name="Elias J.E."/>
            <person name="Goswami T."/>
            <person name="Rad R."/>
            <person name="Beausoleil S.A."/>
            <person name="Villen J."/>
            <person name="Haas W."/>
            <person name="Sowa M.E."/>
            <person name="Gygi S.P."/>
        </authorList>
    </citation>
    <scope>IDENTIFICATION BY MASS SPECTROMETRY [LARGE SCALE ANALYSIS]</scope>
    <source>
        <tissue>Brain</tissue>
        <tissue>Kidney</tissue>
        <tissue>Liver</tissue>
        <tissue>Lung</tissue>
        <tissue>Testis</tissue>
    </source>
</reference>
<keyword id="KW-0378">Hydrolase</keyword>
<keyword id="KW-1185">Reference proteome</keyword>
<keyword id="KW-0719">Serine esterase</keyword>
<name>OVCA2_MOUSE</name>
<protein>
    <recommendedName>
        <fullName>Esterase OVCA2</fullName>
        <ecNumber evidence="2">3.1.1.1</ecNumber>
    </recommendedName>
    <alternativeName>
        <fullName>OVCA2 serine hydrolase domain-containing protein</fullName>
    </alternativeName>
    <alternativeName>
        <fullName>Ovarian cancer-associated gene 2 protein homolog</fullName>
    </alternativeName>
</protein>
<proteinExistence type="evidence at protein level"/>